<name>OTC_NEIMA</name>
<reference key="1">
    <citation type="journal article" date="2000" name="Nature">
        <title>Complete DNA sequence of a serogroup A strain of Neisseria meningitidis Z2491.</title>
        <authorList>
            <person name="Parkhill J."/>
            <person name="Achtman M."/>
            <person name="James K.D."/>
            <person name="Bentley S.D."/>
            <person name="Churcher C.M."/>
            <person name="Klee S.R."/>
            <person name="Morelli G."/>
            <person name="Basham D."/>
            <person name="Brown D."/>
            <person name="Chillingworth T."/>
            <person name="Davies R.M."/>
            <person name="Davis P."/>
            <person name="Devlin K."/>
            <person name="Feltwell T."/>
            <person name="Hamlin N."/>
            <person name="Holroyd S."/>
            <person name="Jagels K."/>
            <person name="Leather S."/>
            <person name="Moule S."/>
            <person name="Mungall K.L."/>
            <person name="Quail M.A."/>
            <person name="Rajandream M.A."/>
            <person name="Rutherford K.M."/>
            <person name="Simmonds M."/>
            <person name="Skelton J."/>
            <person name="Whitehead S."/>
            <person name="Spratt B.G."/>
            <person name="Barrell B.G."/>
        </authorList>
    </citation>
    <scope>NUCLEOTIDE SEQUENCE [LARGE SCALE GENOMIC DNA]</scope>
    <source>
        <strain>DSM 15465 / Z2491</strain>
    </source>
</reference>
<reference key="2">
    <citation type="journal article" date="1992" name="Mol. Microbiol.">
        <title>Sequence diversity within the argF, fbp and recA genes of natural isolates of Neisseria meningitidis: interspecies recombination within the argF gene.</title>
        <authorList>
            <person name="Zhou J."/>
            <person name="Spratt B.G."/>
        </authorList>
    </citation>
    <scope>NUCLEOTIDE SEQUENCE [GENOMIC DNA] OF 53-314</scope>
    <source>
        <strain>CCUG 23099 / HF46 / Serogroup A / Serotype NT</strain>
    </source>
</reference>
<evidence type="ECO:0000250" key="1"/>
<evidence type="ECO:0000255" key="2">
    <source>
        <dbReference type="HAMAP-Rule" id="MF_01109"/>
    </source>
</evidence>
<evidence type="ECO:0000305" key="3"/>
<proteinExistence type="inferred from homology"/>
<keyword id="KW-0028">Amino-acid biosynthesis</keyword>
<keyword id="KW-0055">Arginine biosynthesis</keyword>
<keyword id="KW-0963">Cytoplasm</keyword>
<keyword id="KW-0808">Transferase</keyword>
<sequence length="331" mass="36704">MNLKNRHFLKLLDFTPEEITAYLDLAAELKAAKKAGREIQRMKGKNIALIFEKTSTRTRCAFEVAARDQGAGVTYLEPSASQIGHKESIKDTARVLGRMYDAIEYRGFGQETVEELAKYAGVPVFNGLTNEFHPTQMLADALTMREHSGKPLNQTAFAYVGDARYNMGNSLLILGAKLGMDVRIGAPQSLWPSEGIIAAAHAAAKETGAKITLTENAHEAVKNVDFIHTDVWVSMGEPKEVWQERIDLLKDYRVTPELMAASGNPQVKFMHCLPAFHNRETKVGEWIYETFGLNGVEVTEEVFESPASIVFDQAENRMHTIKAVMVAALGD</sequence>
<organism>
    <name type="scientific">Neisseria meningitidis serogroup A / serotype 4A (strain DSM 15465 / Z2491)</name>
    <dbReference type="NCBI Taxonomy" id="122587"/>
    <lineage>
        <taxon>Bacteria</taxon>
        <taxon>Pseudomonadati</taxon>
        <taxon>Pseudomonadota</taxon>
        <taxon>Betaproteobacteria</taxon>
        <taxon>Neisseriales</taxon>
        <taxon>Neisseriaceae</taxon>
        <taxon>Neisseria</taxon>
    </lineage>
</organism>
<gene>
    <name type="primary">argF</name>
    <name type="ordered locus">NMA1762</name>
</gene>
<protein>
    <recommendedName>
        <fullName>Ornithine carbamoyltransferase</fullName>
        <shortName>OTCase</shortName>
        <ecNumber>2.1.3.3</ecNumber>
    </recommendedName>
</protein>
<comment type="function">
    <text evidence="1">Reversibly catalyzes the transfer of the carbamoyl group from carbamoyl phosphate (CP) to the N(epsilon) atom of ornithine (ORN) to produce L-citrulline.</text>
</comment>
<comment type="catalytic activity">
    <reaction>
        <text>carbamoyl phosphate + L-ornithine = L-citrulline + phosphate + H(+)</text>
        <dbReference type="Rhea" id="RHEA:19513"/>
        <dbReference type="ChEBI" id="CHEBI:15378"/>
        <dbReference type="ChEBI" id="CHEBI:43474"/>
        <dbReference type="ChEBI" id="CHEBI:46911"/>
        <dbReference type="ChEBI" id="CHEBI:57743"/>
        <dbReference type="ChEBI" id="CHEBI:58228"/>
        <dbReference type="EC" id="2.1.3.3"/>
    </reaction>
</comment>
<comment type="pathway">
    <text>Amino-acid biosynthesis; L-arginine biosynthesis; L-arginine from L-ornithine and carbamoyl phosphate: step 1/3.</text>
</comment>
<comment type="subcellular location">
    <subcellularLocation>
        <location evidence="1">Cytoplasm</location>
    </subcellularLocation>
</comment>
<comment type="similarity">
    <text evidence="3">Belongs to the aspartate/ornithine carbamoyltransferase superfamily. OTCase family.</text>
</comment>
<dbReference type="EC" id="2.1.3.3"/>
<dbReference type="EMBL" id="AL157959">
    <property type="protein sequence ID" value="CAM08889.1"/>
    <property type="molecule type" value="Genomic_DNA"/>
</dbReference>
<dbReference type="EMBL" id="X64865">
    <property type="protein sequence ID" value="CAA46077.1"/>
    <property type="molecule type" value="Genomic_DNA"/>
</dbReference>
<dbReference type="PIR" id="B81801">
    <property type="entry name" value="B81801"/>
</dbReference>
<dbReference type="PIR" id="S24734">
    <property type="entry name" value="S24734"/>
</dbReference>
<dbReference type="RefSeq" id="WP_002237211.1">
    <property type="nucleotide sequence ID" value="NC_003116.1"/>
</dbReference>
<dbReference type="SMR" id="Q9JTI4"/>
<dbReference type="EnsemblBacteria" id="CAM08889">
    <property type="protein sequence ID" value="CAM08889"/>
    <property type="gene ID" value="NMA1762"/>
</dbReference>
<dbReference type="GeneID" id="93387815"/>
<dbReference type="KEGG" id="nma:NMA1762"/>
<dbReference type="HOGENOM" id="CLU_043846_3_1_4"/>
<dbReference type="UniPathway" id="UPA00068">
    <property type="reaction ID" value="UER00112"/>
</dbReference>
<dbReference type="Proteomes" id="UP000000626">
    <property type="component" value="Chromosome"/>
</dbReference>
<dbReference type="GO" id="GO:0005737">
    <property type="term" value="C:cytoplasm"/>
    <property type="evidence" value="ECO:0007669"/>
    <property type="project" value="UniProtKB-SubCell"/>
</dbReference>
<dbReference type="GO" id="GO:0016597">
    <property type="term" value="F:amino acid binding"/>
    <property type="evidence" value="ECO:0007669"/>
    <property type="project" value="InterPro"/>
</dbReference>
<dbReference type="GO" id="GO:0004585">
    <property type="term" value="F:ornithine carbamoyltransferase activity"/>
    <property type="evidence" value="ECO:0007669"/>
    <property type="project" value="UniProtKB-UniRule"/>
</dbReference>
<dbReference type="GO" id="GO:0042450">
    <property type="term" value="P:arginine biosynthetic process via ornithine"/>
    <property type="evidence" value="ECO:0007669"/>
    <property type="project" value="TreeGrafter"/>
</dbReference>
<dbReference type="GO" id="GO:0019240">
    <property type="term" value="P:citrulline biosynthetic process"/>
    <property type="evidence" value="ECO:0007669"/>
    <property type="project" value="TreeGrafter"/>
</dbReference>
<dbReference type="GO" id="GO:0006526">
    <property type="term" value="P:L-arginine biosynthetic process"/>
    <property type="evidence" value="ECO:0007669"/>
    <property type="project" value="UniProtKB-UniRule"/>
</dbReference>
<dbReference type="FunFam" id="3.40.50.1370:FF:000004">
    <property type="entry name" value="Ornithine carbamoyltransferase"/>
    <property type="match status" value="1"/>
</dbReference>
<dbReference type="Gene3D" id="3.40.50.1370">
    <property type="entry name" value="Aspartate/ornithine carbamoyltransferase"/>
    <property type="match status" value="2"/>
</dbReference>
<dbReference type="HAMAP" id="MF_01109">
    <property type="entry name" value="OTCase"/>
    <property type="match status" value="1"/>
</dbReference>
<dbReference type="InterPro" id="IPR006132">
    <property type="entry name" value="Asp/Orn_carbamoyltranf_P-bd"/>
</dbReference>
<dbReference type="InterPro" id="IPR006130">
    <property type="entry name" value="Asp/Orn_carbamoylTrfase"/>
</dbReference>
<dbReference type="InterPro" id="IPR036901">
    <property type="entry name" value="Asp/Orn_carbamoylTrfase_sf"/>
</dbReference>
<dbReference type="InterPro" id="IPR006131">
    <property type="entry name" value="Asp_carbamoyltransf_Asp/Orn-bd"/>
</dbReference>
<dbReference type="InterPro" id="IPR002292">
    <property type="entry name" value="Orn/put_carbamltrans"/>
</dbReference>
<dbReference type="InterPro" id="IPR024904">
    <property type="entry name" value="OTCase_ArgI"/>
</dbReference>
<dbReference type="NCBIfam" id="TIGR00658">
    <property type="entry name" value="orni_carb_tr"/>
    <property type="match status" value="1"/>
</dbReference>
<dbReference type="NCBIfam" id="NF002470">
    <property type="entry name" value="PRK01713.1"/>
    <property type="match status" value="1"/>
</dbReference>
<dbReference type="NCBIfam" id="NF003286">
    <property type="entry name" value="PRK04284.1"/>
    <property type="match status" value="1"/>
</dbReference>
<dbReference type="PANTHER" id="PTHR45753:SF2">
    <property type="entry name" value="ORNITHINE CARBAMOYLTRANSFERASE"/>
    <property type="match status" value="1"/>
</dbReference>
<dbReference type="PANTHER" id="PTHR45753">
    <property type="entry name" value="ORNITHINE CARBAMOYLTRANSFERASE, MITOCHONDRIAL"/>
    <property type="match status" value="1"/>
</dbReference>
<dbReference type="Pfam" id="PF00185">
    <property type="entry name" value="OTCace"/>
    <property type="match status" value="1"/>
</dbReference>
<dbReference type="Pfam" id="PF02729">
    <property type="entry name" value="OTCace_N"/>
    <property type="match status" value="1"/>
</dbReference>
<dbReference type="PRINTS" id="PR00100">
    <property type="entry name" value="AOTCASE"/>
</dbReference>
<dbReference type="PRINTS" id="PR00102">
    <property type="entry name" value="OTCASE"/>
</dbReference>
<dbReference type="SUPFAM" id="SSF53671">
    <property type="entry name" value="Aspartate/ornithine carbamoyltransferase"/>
    <property type="match status" value="1"/>
</dbReference>
<dbReference type="PROSITE" id="PS00097">
    <property type="entry name" value="CARBAMOYLTRANSFERASE"/>
    <property type="match status" value="1"/>
</dbReference>
<accession>Q9JTI4</accession>
<accession>A1ISX7</accession>
<feature type="chain" id="PRO_0000112964" description="Ornithine carbamoyltransferase">
    <location>
        <begin position="1"/>
        <end position="331"/>
    </location>
</feature>
<feature type="binding site" evidence="2">
    <location>
        <begin position="55"/>
        <end position="58"/>
    </location>
    <ligand>
        <name>carbamoyl phosphate</name>
        <dbReference type="ChEBI" id="CHEBI:58228"/>
    </ligand>
</feature>
<feature type="binding site" evidence="2">
    <location>
        <position position="82"/>
    </location>
    <ligand>
        <name>carbamoyl phosphate</name>
        <dbReference type="ChEBI" id="CHEBI:58228"/>
    </ligand>
</feature>
<feature type="binding site" evidence="2">
    <location>
        <position position="106"/>
    </location>
    <ligand>
        <name>carbamoyl phosphate</name>
        <dbReference type="ChEBI" id="CHEBI:58228"/>
    </ligand>
</feature>
<feature type="binding site" evidence="2">
    <location>
        <begin position="133"/>
        <end position="136"/>
    </location>
    <ligand>
        <name>carbamoyl phosphate</name>
        <dbReference type="ChEBI" id="CHEBI:58228"/>
    </ligand>
</feature>
<feature type="binding site" evidence="2">
    <location>
        <position position="166"/>
    </location>
    <ligand>
        <name>L-ornithine</name>
        <dbReference type="ChEBI" id="CHEBI:46911"/>
    </ligand>
</feature>
<feature type="binding site" evidence="2">
    <location>
        <position position="230"/>
    </location>
    <ligand>
        <name>L-ornithine</name>
        <dbReference type="ChEBI" id="CHEBI:46911"/>
    </ligand>
</feature>
<feature type="binding site" evidence="2">
    <location>
        <begin position="234"/>
        <end position="235"/>
    </location>
    <ligand>
        <name>L-ornithine</name>
        <dbReference type="ChEBI" id="CHEBI:46911"/>
    </ligand>
</feature>
<feature type="binding site" evidence="2">
    <location>
        <begin position="272"/>
        <end position="273"/>
    </location>
    <ligand>
        <name>carbamoyl phosphate</name>
        <dbReference type="ChEBI" id="CHEBI:58228"/>
    </ligand>
</feature>
<feature type="binding site" evidence="2">
    <location>
        <position position="317"/>
    </location>
    <ligand>
        <name>carbamoyl phosphate</name>
        <dbReference type="ChEBI" id="CHEBI:58228"/>
    </ligand>
</feature>